<proteinExistence type="inferred from homology"/>
<accession>A6M3M4</accession>
<reference key="1">
    <citation type="submission" date="2007-06" db="EMBL/GenBank/DDBJ databases">
        <title>Complete sequence of Clostridium beijerinckii NCIMB 8052.</title>
        <authorList>
            <consortium name="US DOE Joint Genome Institute"/>
            <person name="Copeland A."/>
            <person name="Lucas S."/>
            <person name="Lapidus A."/>
            <person name="Barry K."/>
            <person name="Detter J.C."/>
            <person name="Glavina del Rio T."/>
            <person name="Hammon N."/>
            <person name="Israni S."/>
            <person name="Dalin E."/>
            <person name="Tice H."/>
            <person name="Pitluck S."/>
            <person name="Sims D."/>
            <person name="Brettin T."/>
            <person name="Bruce D."/>
            <person name="Tapia R."/>
            <person name="Brainard J."/>
            <person name="Schmutz J."/>
            <person name="Larimer F."/>
            <person name="Land M."/>
            <person name="Hauser L."/>
            <person name="Kyrpides N."/>
            <person name="Mikhailova N."/>
            <person name="Bennet G."/>
            <person name="Cann I."/>
            <person name="Chen J.-S."/>
            <person name="Contreras A.L."/>
            <person name="Jones D."/>
            <person name="Kashket E."/>
            <person name="Mitchell W."/>
            <person name="Stoddard S."/>
            <person name="Schwarz W."/>
            <person name="Qureshi N."/>
            <person name="Young M."/>
            <person name="Shi Z."/>
            <person name="Ezeji T."/>
            <person name="White B."/>
            <person name="Blaschek H."/>
            <person name="Richardson P."/>
        </authorList>
    </citation>
    <scope>NUCLEOTIDE SEQUENCE [LARGE SCALE GENOMIC DNA]</scope>
    <source>
        <strain>ATCC 51743 / NCIMB 8052</strain>
    </source>
</reference>
<name>MNMG_CLOB8</name>
<dbReference type="EMBL" id="CP000721">
    <property type="protein sequence ID" value="ABR37204.1"/>
    <property type="molecule type" value="Genomic_DNA"/>
</dbReference>
<dbReference type="RefSeq" id="WP_012061247.1">
    <property type="nucleotide sequence ID" value="NC_009617.1"/>
</dbReference>
<dbReference type="SMR" id="A6M3M4"/>
<dbReference type="KEGG" id="cbe:Cbei_5098"/>
<dbReference type="eggNOG" id="COG0445">
    <property type="taxonomic scope" value="Bacteria"/>
</dbReference>
<dbReference type="HOGENOM" id="CLU_007831_2_2_9"/>
<dbReference type="Proteomes" id="UP000000565">
    <property type="component" value="Chromosome"/>
</dbReference>
<dbReference type="GO" id="GO:0005829">
    <property type="term" value="C:cytosol"/>
    <property type="evidence" value="ECO:0007669"/>
    <property type="project" value="TreeGrafter"/>
</dbReference>
<dbReference type="GO" id="GO:0050660">
    <property type="term" value="F:flavin adenine dinucleotide binding"/>
    <property type="evidence" value="ECO:0007669"/>
    <property type="project" value="UniProtKB-UniRule"/>
</dbReference>
<dbReference type="GO" id="GO:0030488">
    <property type="term" value="P:tRNA methylation"/>
    <property type="evidence" value="ECO:0007669"/>
    <property type="project" value="TreeGrafter"/>
</dbReference>
<dbReference type="GO" id="GO:0002098">
    <property type="term" value="P:tRNA wobble uridine modification"/>
    <property type="evidence" value="ECO:0007669"/>
    <property type="project" value="InterPro"/>
</dbReference>
<dbReference type="FunFam" id="1.10.10.1800:FF:000001">
    <property type="entry name" value="tRNA uridine 5-carboxymethylaminomethyl modification enzyme MnmG"/>
    <property type="match status" value="1"/>
</dbReference>
<dbReference type="FunFam" id="1.10.150.570:FF:000001">
    <property type="entry name" value="tRNA uridine 5-carboxymethylaminomethyl modification enzyme MnmG"/>
    <property type="match status" value="1"/>
</dbReference>
<dbReference type="FunFam" id="3.50.50.60:FF:000002">
    <property type="entry name" value="tRNA uridine 5-carboxymethylaminomethyl modification enzyme MnmG"/>
    <property type="match status" value="1"/>
</dbReference>
<dbReference type="FunFam" id="3.50.50.60:FF:000063">
    <property type="entry name" value="tRNA uridine 5-carboxymethylaminomethyl modification enzyme MnmG"/>
    <property type="match status" value="1"/>
</dbReference>
<dbReference type="Gene3D" id="3.50.50.60">
    <property type="entry name" value="FAD/NAD(P)-binding domain"/>
    <property type="match status" value="2"/>
</dbReference>
<dbReference type="Gene3D" id="1.10.150.570">
    <property type="entry name" value="GidA associated domain, C-terminal subdomain"/>
    <property type="match status" value="1"/>
</dbReference>
<dbReference type="Gene3D" id="1.10.10.1800">
    <property type="entry name" value="tRNA uridine 5-carboxymethylaminomethyl modification enzyme MnmG/GidA"/>
    <property type="match status" value="1"/>
</dbReference>
<dbReference type="HAMAP" id="MF_00129">
    <property type="entry name" value="MnmG_GidA"/>
    <property type="match status" value="1"/>
</dbReference>
<dbReference type="InterPro" id="IPR036188">
    <property type="entry name" value="FAD/NAD-bd_sf"/>
</dbReference>
<dbReference type="InterPro" id="IPR049312">
    <property type="entry name" value="GIDA_C_N"/>
</dbReference>
<dbReference type="InterPro" id="IPR004416">
    <property type="entry name" value="MnmG"/>
</dbReference>
<dbReference type="InterPro" id="IPR002218">
    <property type="entry name" value="MnmG-rel"/>
</dbReference>
<dbReference type="InterPro" id="IPR020595">
    <property type="entry name" value="MnmG-rel_CS"/>
</dbReference>
<dbReference type="InterPro" id="IPR026904">
    <property type="entry name" value="MnmG_C"/>
</dbReference>
<dbReference type="InterPro" id="IPR047001">
    <property type="entry name" value="MnmG_C_subdom"/>
</dbReference>
<dbReference type="InterPro" id="IPR044920">
    <property type="entry name" value="MnmG_C_subdom_sf"/>
</dbReference>
<dbReference type="InterPro" id="IPR040131">
    <property type="entry name" value="MnmG_N"/>
</dbReference>
<dbReference type="NCBIfam" id="TIGR00136">
    <property type="entry name" value="mnmG_gidA"/>
    <property type="match status" value="1"/>
</dbReference>
<dbReference type="PANTHER" id="PTHR11806">
    <property type="entry name" value="GLUCOSE INHIBITED DIVISION PROTEIN A"/>
    <property type="match status" value="1"/>
</dbReference>
<dbReference type="PANTHER" id="PTHR11806:SF0">
    <property type="entry name" value="PROTEIN MTO1 HOMOLOG, MITOCHONDRIAL"/>
    <property type="match status" value="1"/>
</dbReference>
<dbReference type="Pfam" id="PF01134">
    <property type="entry name" value="GIDA"/>
    <property type="match status" value="1"/>
</dbReference>
<dbReference type="Pfam" id="PF21680">
    <property type="entry name" value="GIDA_C_1st"/>
    <property type="match status" value="1"/>
</dbReference>
<dbReference type="Pfam" id="PF13932">
    <property type="entry name" value="SAM_GIDA_C"/>
    <property type="match status" value="1"/>
</dbReference>
<dbReference type="PRINTS" id="PR00368">
    <property type="entry name" value="FADPNR"/>
</dbReference>
<dbReference type="PRINTS" id="PR00411">
    <property type="entry name" value="PNDRDTASEI"/>
</dbReference>
<dbReference type="SMART" id="SM01228">
    <property type="entry name" value="GIDA_assoc_3"/>
    <property type="match status" value="1"/>
</dbReference>
<dbReference type="SUPFAM" id="SSF51905">
    <property type="entry name" value="FAD/NAD(P)-binding domain"/>
    <property type="match status" value="1"/>
</dbReference>
<dbReference type="PROSITE" id="PS01280">
    <property type="entry name" value="GIDA_1"/>
    <property type="match status" value="1"/>
</dbReference>
<dbReference type="PROSITE" id="PS01281">
    <property type="entry name" value="GIDA_2"/>
    <property type="match status" value="1"/>
</dbReference>
<sequence length="626" mass="70211">MAVNYDGGQFDIVVVGAGHAGCEAALASARLGLNTLVCTINLDSIALMPCNPNIGGTAKGHLVREIDALGGEMGINIDNTFIQSRMLNTSKGPAVHSLRAQADKKSYQFRMKRILEEQENLKIRQIEVTELNVENGKVTGVVTKNGAIFKCKAVILATGTYLKGKIIIGEVSYSGGPNGLFPANDLSQSLLDLGVSLRRFKTGTPARINRRSVDFSKMIEQNGDDNIIPFSFMSENIEREQVSCYLTYTNDETRKIIRDNIGRSPIYNGSIKGVGPRYCPSIEDKIMRFPDKPQHQIFIEPEGLDTLEMYVGGFSSSLPEEVQIKMLKTLPGLENVEMMRTAYAIEYDSIDPTQLKPTLEFKDIEGLYGAGQLNGSSGYEEAGAQGLIAGINAALKIKEKEPLILTRSDAYIGVLIDDLVTKGTNEPYRMMTSRAEYRLLLRQDNADFRLTNLGYRVGLVTEERYDKFIKRKQNIENELERLKNLKVTNKKEINEFLISLNSAELRKPITFYELLQRPELDYFDLKQIDSERPELPHDVGEQINILTKYEGYIQSQLEQVAQFKKFEKKLLPKDINYSDIKGLRTEAIQKLSDIRPISIGQATRISGVSPADISVLLIYLEHYYNK</sequence>
<organism>
    <name type="scientific">Clostridium beijerinckii (strain ATCC 51743 / NCIMB 8052)</name>
    <name type="common">Clostridium acetobutylicum</name>
    <dbReference type="NCBI Taxonomy" id="290402"/>
    <lineage>
        <taxon>Bacteria</taxon>
        <taxon>Bacillati</taxon>
        <taxon>Bacillota</taxon>
        <taxon>Clostridia</taxon>
        <taxon>Eubacteriales</taxon>
        <taxon>Clostridiaceae</taxon>
        <taxon>Clostridium</taxon>
    </lineage>
</organism>
<protein>
    <recommendedName>
        <fullName evidence="1">tRNA uridine 5-carboxymethylaminomethyl modification enzyme MnmG</fullName>
    </recommendedName>
    <alternativeName>
        <fullName evidence="1">Glucose-inhibited division protein A</fullName>
    </alternativeName>
</protein>
<comment type="function">
    <text evidence="1">NAD-binding protein involved in the addition of a carboxymethylaminomethyl (cmnm) group at the wobble position (U34) of certain tRNAs, forming tRNA-cmnm(5)s(2)U34.</text>
</comment>
<comment type="cofactor">
    <cofactor evidence="1">
        <name>FAD</name>
        <dbReference type="ChEBI" id="CHEBI:57692"/>
    </cofactor>
</comment>
<comment type="subunit">
    <text evidence="1">Homodimer. Heterotetramer of two MnmE and two MnmG subunits.</text>
</comment>
<comment type="subcellular location">
    <subcellularLocation>
        <location evidence="1">Cytoplasm</location>
    </subcellularLocation>
</comment>
<comment type="similarity">
    <text evidence="1">Belongs to the MnmG family.</text>
</comment>
<feature type="chain" id="PRO_0000345257" description="tRNA uridine 5-carboxymethylaminomethyl modification enzyme MnmG">
    <location>
        <begin position="1"/>
        <end position="626"/>
    </location>
</feature>
<feature type="binding site" evidence="1">
    <location>
        <begin position="16"/>
        <end position="21"/>
    </location>
    <ligand>
        <name>FAD</name>
        <dbReference type="ChEBI" id="CHEBI:57692"/>
    </ligand>
</feature>
<feature type="binding site" evidence="1">
    <location>
        <begin position="275"/>
        <end position="289"/>
    </location>
    <ligand>
        <name>NAD(+)</name>
        <dbReference type="ChEBI" id="CHEBI:57540"/>
    </ligand>
</feature>
<evidence type="ECO:0000255" key="1">
    <source>
        <dbReference type="HAMAP-Rule" id="MF_00129"/>
    </source>
</evidence>
<gene>
    <name evidence="1" type="primary">mnmG</name>
    <name evidence="1" type="synonym">gidA</name>
    <name type="ordered locus">Cbei_5098</name>
</gene>
<keyword id="KW-0963">Cytoplasm</keyword>
<keyword id="KW-0274">FAD</keyword>
<keyword id="KW-0285">Flavoprotein</keyword>
<keyword id="KW-0520">NAD</keyword>
<keyword id="KW-0819">tRNA processing</keyword>